<organism>
    <name type="scientific">Synechococcus elongatus (strain ATCC 33912 / PCC 7942 / FACHB-805)</name>
    <name type="common">Anacystis nidulans R2</name>
    <dbReference type="NCBI Taxonomy" id="1140"/>
    <lineage>
        <taxon>Bacteria</taxon>
        <taxon>Bacillati</taxon>
        <taxon>Cyanobacteriota</taxon>
        <taxon>Cyanophyceae</taxon>
        <taxon>Synechococcales</taxon>
        <taxon>Synechococcaceae</taxon>
        <taxon>Synechococcus</taxon>
    </lineage>
</organism>
<evidence type="ECO:0000255" key="1">
    <source>
        <dbReference type="HAMAP-Rule" id="MF_00061"/>
    </source>
</evidence>
<name>ISPE_SYNE7</name>
<keyword id="KW-0067">ATP-binding</keyword>
<keyword id="KW-0414">Isoprene biosynthesis</keyword>
<keyword id="KW-0418">Kinase</keyword>
<keyword id="KW-0547">Nucleotide-binding</keyword>
<keyword id="KW-1185">Reference proteome</keyword>
<keyword id="KW-0808">Transferase</keyword>
<protein>
    <recommendedName>
        <fullName evidence="1">4-diphosphocytidyl-2-C-methyl-D-erythritol kinase</fullName>
        <shortName evidence="1">CMK</shortName>
        <ecNumber evidence="1">2.7.1.148</ecNumber>
    </recommendedName>
    <alternativeName>
        <fullName evidence="1">4-(cytidine-5'-diphospho)-2-C-methyl-D-erythritol kinase</fullName>
    </alternativeName>
</protein>
<proteinExistence type="inferred from homology"/>
<sequence length="314" mass="33747">MKTLTLVAPAKINFYLEILGDRPDGFHELAMVMQSIALGDRLHLRQRQGQGFQLGCDRADLEVDERNLILKAAQRLQRSFPQIGGVDFFLEKRIPIGAGLAGGSTDGAAALVGLDIFSGLGLTQPELEAIAAELGSDMPFCVAGGTQLCTSRGEQLTPLPPLPSLSLVLAKFESLSVSTPWAYGRYREQFGDRYLQTEPARRDRLQALHAGPLLQAMSAGDPVAIAQHLRNDLEAVVLPEYPQVAELRSVLGNCSGILAAQMSGSGPSVFGIAENPTAAQAAVEQVRQAIADPDLKLWVTQTISHGIQTETLLR</sequence>
<feature type="chain" id="PRO_0000235145" description="4-diphosphocytidyl-2-C-methyl-D-erythritol kinase">
    <location>
        <begin position="1"/>
        <end position="314"/>
    </location>
</feature>
<feature type="active site" evidence="1">
    <location>
        <position position="11"/>
    </location>
</feature>
<feature type="active site" evidence="1">
    <location>
        <position position="137"/>
    </location>
</feature>
<feature type="binding site" evidence="1">
    <location>
        <begin position="95"/>
        <end position="105"/>
    </location>
    <ligand>
        <name>ATP</name>
        <dbReference type="ChEBI" id="CHEBI:30616"/>
    </ligand>
</feature>
<comment type="function">
    <text evidence="1">Catalyzes the phosphorylation of the position 2 hydroxy group of 4-diphosphocytidyl-2C-methyl-D-erythritol.</text>
</comment>
<comment type="catalytic activity">
    <reaction evidence="1">
        <text>4-CDP-2-C-methyl-D-erythritol + ATP = 4-CDP-2-C-methyl-D-erythritol 2-phosphate + ADP + H(+)</text>
        <dbReference type="Rhea" id="RHEA:18437"/>
        <dbReference type="ChEBI" id="CHEBI:15378"/>
        <dbReference type="ChEBI" id="CHEBI:30616"/>
        <dbReference type="ChEBI" id="CHEBI:57823"/>
        <dbReference type="ChEBI" id="CHEBI:57919"/>
        <dbReference type="ChEBI" id="CHEBI:456216"/>
        <dbReference type="EC" id="2.7.1.148"/>
    </reaction>
</comment>
<comment type="pathway">
    <text evidence="1">Isoprenoid biosynthesis; isopentenyl diphosphate biosynthesis via DXP pathway; isopentenyl diphosphate from 1-deoxy-D-xylulose 5-phosphate: step 3/6.</text>
</comment>
<comment type="similarity">
    <text evidence="1">Belongs to the GHMP kinase family. IspE subfamily.</text>
</comment>
<dbReference type="EC" id="2.7.1.148" evidence="1"/>
<dbReference type="EMBL" id="CP000100">
    <property type="protein sequence ID" value="ABB56342.1"/>
    <property type="molecule type" value="Genomic_DNA"/>
</dbReference>
<dbReference type="RefSeq" id="WP_011243515.1">
    <property type="nucleotide sequence ID" value="NZ_JACJTX010000002.1"/>
</dbReference>
<dbReference type="SMR" id="Q31RH7"/>
<dbReference type="STRING" id="1140.Synpcc7942_0310"/>
<dbReference type="PaxDb" id="1140-Synpcc7942_0310"/>
<dbReference type="GeneID" id="72429126"/>
<dbReference type="KEGG" id="syf:Synpcc7942_0310"/>
<dbReference type="eggNOG" id="COG1947">
    <property type="taxonomic scope" value="Bacteria"/>
</dbReference>
<dbReference type="HOGENOM" id="CLU_053057_1_1_3"/>
<dbReference type="OrthoDB" id="9809438at2"/>
<dbReference type="BioCyc" id="SYNEL:SYNPCC7942_0310-MONOMER"/>
<dbReference type="UniPathway" id="UPA00056">
    <property type="reaction ID" value="UER00094"/>
</dbReference>
<dbReference type="Proteomes" id="UP000889800">
    <property type="component" value="Chromosome"/>
</dbReference>
<dbReference type="GO" id="GO:0050515">
    <property type="term" value="F:4-(cytidine 5'-diphospho)-2-C-methyl-D-erythritol kinase activity"/>
    <property type="evidence" value="ECO:0007669"/>
    <property type="project" value="UniProtKB-UniRule"/>
</dbReference>
<dbReference type="GO" id="GO:0005524">
    <property type="term" value="F:ATP binding"/>
    <property type="evidence" value="ECO:0007669"/>
    <property type="project" value="UniProtKB-UniRule"/>
</dbReference>
<dbReference type="GO" id="GO:0019288">
    <property type="term" value="P:isopentenyl diphosphate biosynthetic process, methylerythritol 4-phosphate pathway"/>
    <property type="evidence" value="ECO:0007669"/>
    <property type="project" value="UniProtKB-UniRule"/>
</dbReference>
<dbReference type="GO" id="GO:0016114">
    <property type="term" value="P:terpenoid biosynthetic process"/>
    <property type="evidence" value="ECO:0007669"/>
    <property type="project" value="InterPro"/>
</dbReference>
<dbReference type="Gene3D" id="3.30.230.10">
    <property type="match status" value="1"/>
</dbReference>
<dbReference type="Gene3D" id="3.30.70.890">
    <property type="entry name" value="GHMP kinase, C-terminal domain"/>
    <property type="match status" value="1"/>
</dbReference>
<dbReference type="HAMAP" id="MF_00061">
    <property type="entry name" value="IspE"/>
    <property type="match status" value="1"/>
</dbReference>
<dbReference type="InterPro" id="IPR013750">
    <property type="entry name" value="GHMP_kinase_C_dom"/>
</dbReference>
<dbReference type="InterPro" id="IPR036554">
    <property type="entry name" value="GHMP_kinase_C_sf"/>
</dbReference>
<dbReference type="InterPro" id="IPR006204">
    <property type="entry name" value="GHMP_kinase_N_dom"/>
</dbReference>
<dbReference type="InterPro" id="IPR004424">
    <property type="entry name" value="IspE"/>
</dbReference>
<dbReference type="InterPro" id="IPR020568">
    <property type="entry name" value="Ribosomal_Su5_D2-typ_SF"/>
</dbReference>
<dbReference type="InterPro" id="IPR014721">
    <property type="entry name" value="Ribsml_uS5_D2-typ_fold_subgr"/>
</dbReference>
<dbReference type="NCBIfam" id="TIGR00154">
    <property type="entry name" value="ispE"/>
    <property type="match status" value="1"/>
</dbReference>
<dbReference type="PANTHER" id="PTHR43527">
    <property type="entry name" value="4-DIPHOSPHOCYTIDYL-2-C-METHYL-D-ERYTHRITOL KINASE, CHLOROPLASTIC"/>
    <property type="match status" value="1"/>
</dbReference>
<dbReference type="PANTHER" id="PTHR43527:SF2">
    <property type="entry name" value="4-DIPHOSPHOCYTIDYL-2-C-METHYL-D-ERYTHRITOL KINASE, CHLOROPLASTIC"/>
    <property type="match status" value="1"/>
</dbReference>
<dbReference type="Pfam" id="PF08544">
    <property type="entry name" value="GHMP_kinases_C"/>
    <property type="match status" value="1"/>
</dbReference>
<dbReference type="Pfam" id="PF00288">
    <property type="entry name" value="GHMP_kinases_N"/>
    <property type="match status" value="1"/>
</dbReference>
<dbReference type="PIRSF" id="PIRSF010376">
    <property type="entry name" value="IspE"/>
    <property type="match status" value="1"/>
</dbReference>
<dbReference type="SUPFAM" id="SSF55060">
    <property type="entry name" value="GHMP Kinase, C-terminal domain"/>
    <property type="match status" value="1"/>
</dbReference>
<dbReference type="SUPFAM" id="SSF54211">
    <property type="entry name" value="Ribosomal protein S5 domain 2-like"/>
    <property type="match status" value="1"/>
</dbReference>
<gene>
    <name evidence="1" type="primary">ispE</name>
    <name type="ordered locus">Synpcc7942_0310</name>
</gene>
<reference key="1">
    <citation type="submission" date="2005-08" db="EMBL/GenBank/DDBJ databases">
        <title>Complete sequence of chromosome 1 of Synechococcus elongatus PCC 7942.</title>
        <authorList>
            <consortium name="US DOE Joint Genome Institute"/>
            <person name="Copeland A."/>
            <person name="Lucas S."/>
            <person name="Lapidus A."/>
            <person name="Barry K."/>
            <person name="Detter J.C."/>
            <person name="Glavina T."/>
            <person name="Hammon N."/>
            <person name="Israni S."/>
            <person name="Pitluck S."/>
            <person name="Schmutz J."/>
            <person name="Larimer F."/>
            <person name="Land M."/>
            <person name="Kyrpides N."/>
            <person name="Lykidis A."/>
            <person name="Golden S."/>
            <person name="Richardson P."/>
        </authorList>
    </citation>
    <scope>NUCLEOTIDE SEQUENCE [LARGE SCALE GENOMIC DNA]</scope>
    <source>
        <strain>ATCC 33912 / PCC 7942 / FACHB-805</strain>
    </source>
</reference>
<accession>Q31RH7</accession>